<sequence length="471" mass="53203">MSNSTLKVKTKSMPDSRLAVELEISAKQCKESYQQALSKLSKTANLPGFRKGKVPQAVLLQQVGAKRIQASAIEKLLEVVWPQALQQESIEPLCEPELIGGFEALLENFNPDSKLTLTLETDISPIPQLKSSKGLTVEAEKVVFDPKKIDELIEQSRKQLSTLIPVENRPAKKGDVAVVSFEGKFTDNNSPIEGGNSDSMDIELEKGQMIPGFVEGIIGMNINDEKTVECTFPKDYPQEDARNRKAKFDIKVKDLKTRELPKLDDDFAKQASDKDSLEELRKELEAKLKEDAHQRSIKNRQEALLKALVEQLEIDLPKTLIEIETRNLIEQTARNFAQQGIDVKSTFTPELINKLMDSSRPEAIENLRRQFAMQALRKEEGIEVPNKEVDKKFEEVKKELSKEKNIDFEKLKEAVLEDLLQDKVFTWLEENNTVIETLPKTKSLNGKPSTQGKTSQSKSKKTKTKVEKTTK</sequence>
<feature type="chain" id="PRO_1000115566" description="Trigger factor">
    <location>
        <begin position="1"/>
        <end position="471"/>
    </location>
</feature>
<feature type="domain" description="PPIase FKBP-type" evidence="1">
    <location>
        <begin position="174"/>
        <end position="261"/>
    </location>
</feature>
<feature type="region of interest" description="Disordered" evidence="2">
    <location>
        <begin position="436"/>
        <end position="471"/>
    </location>
</feature>
<feature type="compositionally biased region" description="Polar residues" evidence="2">
    <location>
        <begin position="436"/>
        <end position="446"/>
    </location>
</feature>
<feature type="compositionally biased region" description="Low complexity" evidence="2">
    <location>
        <begin position="447"/>
        <end position="457"/>
    </location>
</feature>
<organism>
    <name type="scientific">Prochlorococcus marinus (strain MIT 9211)</name>
    <dbReference type="NCBI Taxonomy" id="93059"/>
    <lineage>
        <taxon>Bacteria</taxon>
        <taxon>Bacillati</taxon>
        <taxon>Cyanobacteriota</taxon>
        <taxon>Cyanophyceae</taxon>
        <taxon>Synechococcales</taxon>
        <taxon>Prochlorococcaceae</taxon>
        <taxon>Prochlorococcus</taxon>
    </lineage>
</organism>
<accession>A9BD99</accession>
<keyword id="KW-0131">Cell cycle</keyword>
<keyword id="KW-0132">Cell division</keyword>
<keyword id="KW-0143">Chaperone</keyword>
<keyword id="KW-0963">Cytoplasm</keyword>
<keyword id="KW-0413">Isomerase</keyword>
<keyword id="KW-1185">Reference proteome</keyword>
<keyword id="KW-0697">Rotamase</keyword>
<evidence type="ECO:0000255" key="1">
    <source>
        <dbReference type="HAMAP-Rule" id="MF_00303"/>
    </source>
</evidence>
<evidence type="ECO:0000256" key="2">
    <source>
        <dbReference type="SAM" id="MobiDB-lite"/>
    </source>
</evidence>
<name>TIG_PROM4</name>
<comment type="function">
    <text evidence="1">Involved in protein export. Acts as a chaperone by maintaining the newly synthesized protein in an open conformation. Functions as a peptidyl-prolyl cis-trans isomerase.</text>
</comment>
<comment type="catalytic activity">
    <reaction evidence="1">
        <text>[protein]-peptidylproline (omega=180) = [protein]-peptidylproline (omega=0)</text>
        <dbReference type="Rhea" id="RHEA:16237"/>
        <dbReference type="Rhea" id="RHEA-COMP:10747"/>
        <dbReference type="Rhea" id="RHEA-COMP:10748"/>
        <dbReference type="ChEBI" id="CHEBI:83833"/>
        <dbReference type="ChEBI" id="CHEBI:83834"/>
        <dbReference type="EC" id="5.2.1.8"/>
    </reaction>
</comment>
<comment type="subcellular location">
    <subcellularLocation>
        <location>Cytoplasm</location>
    </subcellularLocation>
    <text evidence="1">About half TF is bound to the ribosome near the polypeptide exit tunnel while the other half is free in the cytoplasm.</text>
</comment>
<comment type="domain">
    <text evidence="1">Consists of 3 domains; the N-terminus binds the ribosome, the middle domain has PPIase activity, while the C-terminus has intrinsic chaperone activity on its own.</text>
</comment>
<comment type="similarity">
    <text evidence="1">Belongs to the FKBP-type PPIase family. Tig subfamily.</text>
</comment>
<dbReference type="EC" id="5.2.1.8" evidence="1"/>
<dbReference type="EMBL" id="CP000878">
    <property type="protein sequence ID" value="ABX09712.1"/>
    <property type="molecule type" value="Genomic_DNA"/>
</dbReference>
<dbReference type="RefSeq" id="WP_012196332.1">
    <property type="nucleotide sequence ID" value="NC_009976.1"/>
</dbReference>
<dbReference type="SMR" id="A9BD99"/>
<dbReference type="STRING" id="93059.P9211_17811"/>
<dbReference type="KEGG" id="pmj:P9211_17811"/>
<dbReference type="eggNOG" id="COG0544">
    <property type="taxonomic scope" value="Bacteria"/>
</dbReference>
<dbReference type="HOGENOM" id="CLU_033058_3_1_3"/>
<dbReference type="OrthoDB" id="9767721at2"/>
<dbReference type="Proteomes" id="UP000000788">
    <property type="component" value="Chromosome"/>
</dbReference>
<dbReference type="GO" id="GO:0005737">
    <property type="term" value="C:cytoplasm"/>
    <property type="evidence" value="ECO:0007669"/>
    <property type="project" value="UniProtKB-SubCell"/>
</dbReference>
<dbReference type="GO" id="GO:0003755">
    <property type="term" value="F:peptidyl-prolyl cis-trans isomerase activity"/>
    <property type="evidence" value="ECO:0007669"/>
    <property type="project" value="UniProtKB-UniRule"/>
</dbReference>
<dbReference type="GO" id="GO:0044183">
    <property type="term" value="F:protein folding chaperone"/>
    <property type="evidence" value="ECO:0007669"/>
    <property type="project" value="TreeGrafter"/>
</dbReference>
<dbReference type="GO" id="GO:0043022">
    <property type="term" value="F:ribosome binding"/>
    <property type="evidence" value="ECO:0007669"/>
    <property type="project" value="TreeGrafter"/>
</dbReference>
<dbReference type="GO" id="GO:0051083">
    <property type="term" value="P:'de novo' cotranslational protein folding"/>
    <property type="evidence" value="ECO:0007669"/>
    <property type="project" value="TreeGrafter"/>
</dbReference>
<dbReference type="GO" id="GO:0051301">
    <property type="term" value="P:cell division"/>
    <property type="evidence" value="ECO:0007669"/>
    <property type="project" value="UniProtKB-KW"/>
</dbReference>
<dbReference type="GO" id="GO:0061077">
    <property type="term" value="P:chaperone-mediated protein folding"/>
    <property type="evidence" value="ECO:0007669"/>
    <property type="project" value="TreeGrafter"/>
</dbReference>
<dbReference type="GO" id="GO:0015031">
    <property type="term" value="P:protein transport"/>
    <property type="evidence" value="ECO:0007669"/>
    <property type="project" value="UniProtKB-UniRule"/>
</dbReference>
<dbReference type="GO" id="GO:0043335">
    <property type="term" value="P:protein unfolding"/>
    <property type="evidence" value="ECO:0007669"/>
    <property type="project" value="TreeGrafter"/>
</dbReference>
<dbReference type="FunFam" id="3.10.50.40:FF:000001">
    <property type="entry name" value="Trigger factor"/>
    <property type="match status" value="1"/>
</dbReference>
<dbReference type="FunFam" id="3.30.70.1050:FF:000004">
    <property type="entry name" value="Trigger factor"/>
    <property type="match status" value="1"/>
</dbReference>
<dbReference type="Gene3D" id="3.10.50.40">
    <property type="match status" value="1"/>
</dbReference>
<dbReference type="Gene3D" id="3.30.70.1050">
    <property type="entry name" value="Trigger factor ribosome-binding domain"/>
    <property type="match status" value="1"/>
</dbReference>
<dbReference type="Gene3D" id="1.10.3120.10">
    <property type="entry name" value="Trigger factor, C-terminal domain"/>
    <property type="match status" value="1"/>
</dbReference>
<dbReference type="HAMAP" id="MF_00303">
    <property type="entry name" value="Trigger_factor_Tig"/>
    <property type="match status" value="1"/>
</dbReference>
<dbReference type="InterPro" id="IPR046357">
    <property type="entry name" value="PPIase_dom_sf"/>
</dbReference>
<dbReference type="InterPro" id="IPR001179">
    <property type="entry name" value="PPIase_FKBP_dom"/>
</dbReference>
<dbReference type="InterPro" id="IPR005215">
    <property type="entry name" value="Trig_fac"/>
</dbReference>
<dbReference type="InterPro" id="IPR008880">
    <property type="entry name" value="Trigger_fac_C"/>
</dbReference>
<dbReference type="InterPro" id="IPR037041">
    <property type="entry name" value="Trigger_fac_C_sf"/>
</dbReference>
<dbReference type="InterPro" id="IPR008881">
    <property type="entry name" value="Trigger_fac_ribosome-bd_bac"/>
</dbReference>
<dbReference type="InterPro" id="IPR036611">
    <property type="entry name" value="Trigger_fac_ribosome-bd_sf"/>
</dbReference>
<dbReference type="InterPro" id="IPR027304">
    <property type="entry name" value="Trigger_fact/SurA_dom_sf"/>
</dbReference>
<dbReference type="NCBIfam" id="TIGR00115">
    <property type="entry name" value="tig"/>
    <property type="match status" value="1"/>
</dbReference>
<dbReference type="PANTHER" id="PTHR30560">
    <property type="entry name" value="TRIGGER FACTOR CHAPERONE AND PEPTIDYL-PROLYL CIS/TRANS ISOMERASE"/>
    <property type="match status" value="1"/>
</dbReference>
<dbReference type="PANTHER" id="PTHR30560:SF3">
    <property type="entry name" value="TRIGGER FACTOR-LIKE PROTEIN TIG, CHLOROPLASTIC"/>
    <property type="match status" value="1"/>
</dbReference>
<dbReference type="Pfam" id="PF00254">
    <property type="entry name" value="FKBP_C"/>
    <property type="match status" value="1"/>
</dbReference>
<dbReference type="Pfam" id="PF05698">
    <property type="entry name" value="Trigger_C"/>
    <property type="match status" value="1"/>
</dbReference>
<dbReference type="Pfam" id="PF05697">
    <property type="entry name" value="Trigger_N"/>
    <property type="match status" value="1"/>
</dbReference>
<dbReference type="PIRSF" id="PIRSF003095">
    <property type="entry name" value="Trigger_factor"/>
    <property type="match status" value="1"/>
</dbReference>
<dbReference type="SUPFAM" id="SSF54534">
    <property type="entry name" value="FKBP-like"/>
    <property type="match status" value="1"/>
</dbReference>
<dbReference type="SUPFAM" id="SSF109998">
    <property type="entry name" value="Triger factor/SurA peptide-binding domain-like"/>
    <property type="match status" value="1"/>
</dbReference>
<dbReference type="SUPFAM" id="SSF102735">
    <property type="entry name" value="Trigger factor ribosome-binding domain"/>
    <property type="match status" value="1"/>
</dbReference>
<dbReference type="PROSITE" id="PS50059">
    <property type="entry name" value="FKBP_PPIASE"/>
    <property type="match status" value="1"/>
</dbReference>
<proteinExistence type="inferred from homology"/>
<gene>
    <name evidence="1" type="primary">tig</name>
    <name type="ordered locus">P9211_17811</name>
</gene>
<protein>
    <recommendedName>
        <fullName evidence="1">Trigger factor</fullName>
        <shortName evidence="1">TF</shortName>
        <ecNumber evidence="1">5.2.1.8</ecNumber>
    </recommendedName>
    <alternativeName>
        <fullName evidence="1">PPIase</fullName>
    </alternativeName>
</protein>
<reference key="1">
    <citation type="journal article" date="2007" name="PLoS Genet.">
        <title>Patterns and implications of gene gain and loss in the evolution of Prochlorococcus.</title>
        <authorList>
            <person name="Kettler G.C."/>
            <person name="Martiny A.C."/>
            <person name="Huang K."/>
            <person name="Zucker J."/>
            <person name="Coleman M.L."/>
            <person name="Rodrigue S."/>
            <person name="Chen F."/>
            <person name="Lapidus A."/>
            <person name="Ferriera S."/>
            <person name="Johnson J."/>
            <person name="Steglich C."/>
            <person name="Church G.M."/>
            <person name="Richardson P."/>
            <person name="Chisholm S.W."/>
        </authorList>
    </citation>
    <scope>NUCLEOTIDE SEQUENCE [LARGE SCALE GENOMIC DNA]</scope>
    <source>
        <strain>MIT 9211</strain>
    </source>
</reference>